<evidence type="ECO:0000255" key="1">
    <source>
        <dbReference type="HAMAP-Rule" id="MF_01811"/>
    </source>
</evidence>
<accession>Q926Q5</accession>
<protein>
    <recommendedName>
        <fullName evidence="1">Membrane protein insertase YidC 2</fullName>
    </recommendedName>
    <alternativeName>
        <fullName evidence="1">Foldase YidC 2</fullName>
    </alternativeName>
    <alternativeName>
        <fullName evidence="1">Membrane integrase YidC 2</fullName>
    </alternativeName>
    <alternativeName>
        <fullName evidence="1">Membrane protein YidC 2</fullName>
    </alternativeName>
</protein>
<gene>
    <name evidence="1" type="primary">yidC2</name>
    <name type="ordered locus">lin2986</name>
</gene>
<comment type="function">
    <text evidence="1">Required for the insertion and/or proper folding and/or complex formation of integral membrane proteins into the membrane. Involved in integration of membrane proteins that insert both dependently and independently of the Sec translocase complex, as well as at least some lipoproteins.</text>
</comment>
<comment type="subcellular location">
    <subcellularLocation>
        <location evidence="1">Cell membrane</location>
        <topology evidence="1">Multi-pass membrane protein</topology>
    </subcellularLocation>
</comment>
<comment type="similarity">
    <text evidence="1">Belongs to the OXA1/ALB3/YidC family. Type 2 subfamily.</text>
</comment>
<organism>
    <name type="scientific">Listeria innocua serovar 6a (strain ATCC BAA-680 / CLIP 11262)</name>
    <dbReference type="NCBI Taxonomy" id="272626"/>
    <lineage>
        <taxon>Bacteria</taxon>
        <taxon>Bacillati</taxon>
        <taxon>Bacillota</taxon>
        <taxon>Bacilli</taxon>
        <taxon>Bacillales</taxon>
        <taxon>Listeriaceae</taxon>
        <taxon>Listeria</taxon>
    </lineage>
</organism>
<proteinExistence type="inferred from homology"/>
<reference key="1">
    <citation type="journal article" date="2001" name="Science">
        <title>Comparative genomics of Listeria species.</title>
        <authorList>
            <person name="Glaser P."/>
            <person name="Frangeul L."/>
            <person name="Buchrieser C."/>
            <person name="Rusniok C."/>
            <person name="Amend A."/>
            <person name="Baquero F."/>
            <person name="Berche P."/>
            <person name="Bloecker H."/>
            <person name="Brandt P."/>
            <person name="Chakraborty T."/>
            <person name="Charbit A."/>
            <person name="Chetouani F."/>
            <person name="Couve E."/>
            <person name="de Daruvar A."/>
            <person name="Dehoux P."/>
            <person name="Domann E."/>
            <person name="Dominguez-Bernal G."/>
            <person name="Duchaud E."/>
            <person name="Durant L."/>
            <person name="Dussurget O."/>
            <person name="Entian K.-D."/>
            <person name="Fsihi H."/>
            <person name="Garcia-del Portillo F."/>
            <person name="Garrido P."/>
            <person name="Gautier L."/>
            <person name="Goebel W."/>
            <person name="Gomez-Lopez N."/>
            <person name="Hain T."/>
            <person name="Hauf J."/>
            <person name="Jackson D."/>
            <person name="Jones L.-M."/>
            <person name="Kaerst U."/>
            <person name="Kreft J."/>
            <person name="Kuhn M."/>
            <person name="Kunst F."/>
            <person name="Kurapkat G."/>
            <person name="Madueno E."/>
            <person name="Maitournam A."/>
            <person name="Mata Vicente J."/>
            <person name="Ng E."/>
            <person name="Nedjari H."/>
            <person name="Nordsiek G."/>
            <person name="Novella S."/>
            <person name="de Pablos B."/>
            <person name="Perez-Diaz J.-C."/>
            <person name="Purcell R."/>
            <person name="Remmel B."/>
            <person name="Rose M."/>
            <person name="Schlueter T."/>
            <person name="Simoes N."/>
            <person name="Tierrez A."/>
            <person name="Vazquez-Boland J.-A."/>
            <person name="Voss H."/>
            <person name="Wehland J."/>
            <person name="Cossart P."/>
        </authorList>
    </citation>
    <scope>NUCLEOTIDE SEQUENCE [LARGE SCALE GENOMIC DNA]</scope>
    <source>
        <strain>ATCC BAA-680 / CLIP 11262</strain>
    </source>
</reference>
<keyword id="KW-1003">Cell membrane</keyword>
<keyword id="KW-0143">Chaperone</keyword>
<keyword id="KW-0449">Lipoprotein</keyword>
<keyword id="KW-0472">Membrane</keyword>
<keyword id="KW-0564">Palmitate</keyword>
<keyword id="KW-0653">Protein transport</keyword>
<keyword id="KW-0732">Signal</keyword>
<keyword id="KW-0812">Transmembrane</keyword>
<keyword id="KW-1133">Transmembrane helix</keyword>
<keyword id="KW-0813">Transport</keyword>
<name>YIDC2_LISIN</name>
<feature type="signal peptide" evidence="1">
    <location>
        <begin position="1"/>
        <end position="26"/>
    </location>
</feature>
<feature type="chain" id="PRO_0000020385" description="Membrane protein insertase YidC 2">
    <location>
        <begin position="27"/>
        <end position="287"/>
    </location>
</feature>
<feature type="transmembrane region" description="Helical" evidence="1">
    <location>
        <begin position="65"/>
        <end position="85"/>
    </location>
</feature>
<feature type="transmembrane region" description="Helical" evidence="1">
    <location>
        <begin position="135"/>
        <end position="155"/>
    </location>
</feature>
<feature type="transmembrane region" description="Helical" evidence="1">
    <location>
        <begin position="178"/>
        <end position="198"/>
    </location>
</feature>
<feature type="transmembrane region" description="Helical" evidence="1">
    <location>
        <begin position="207"/>
        <end position="224"/>
    </location>
</feature>
<feature type="transmembrane region" description="Helical" evidence="1">
    <location>
        <begin position="228"/>
        <end position="250"/>
    </location>
</feature>
<feature type="lipid moiety-binding region" description="N-palmitoyl cysteine" evidence="1">
    <location>
        <position position="27"/>
    </location>
</feature>
<feature type="lipid moiety-binding region" description="S-diacylglycerol cysteine" evidence="1">
    <location>
        <position position="27"/>
    </location>
</feature>
<sequence>MKKKKRFKQKLLIASLVIGLVAVLSGCGYSTDPITKDSTGFWSHYIVFPLSWVITWFSDLFGGNYAVGIIVVTILIRLLIMPLMIKQLKSQKAMTSLQPKIKELQEKYSSKDNETKQKLQQETMRLYQENSVNPMMGCLPLLIQMPILLGFYQAISRTAEIKTDTFLWMQLGNPDPYYILPIVAALTTFLSSKISMMGQTQQNKSMAMIVYIMPVMILFMGITLPSALALYWIIGNIFTVFQTLLINNPFKNKREQEALAAAQLEEERLKKKAANMKASKKGGKKRK</sequence>
<dbReference type="EMBL" id="AL596174">
    <property type="protein sequence ID" value="CAC98211.1"/>
    <property type="molecule type" value="Genomic_DNA"/>
</dbReference>
<dbReference type="PIR" id="AC1805">
    <property type="entry name" value="AC1805"/>
</dbReference>
<dbReference type="RefSeq" id="WP_010991489.1">
    <property type="nucleotide sequence ID" value="NC_003212.1"/>
</dbReference>
<dbReference type="SMR" id="Q926Q5"/>
<dbReference type="STRING" id="272626.gene:17567373"/>
<dbReference type="GeneID" id="93236263"/>
<dbReference type="KEGG" id="lin:lin2986"/>
<dbReference type="eggNOG" id="COG0706">
    <property type="taxonomic scope" value="Bacteria"/>
</dbReference>
<dbReference type="HOGENOM" id="CLU_036138_5_0_9"/>
<dbReference type="OrthoDB" id="9780552at2"/>
<dbReference type="Proteomes" id="UP000002513">
    <property type="component" value="Chromosome"/>
</dbReference>
<dbReference type="GO" id="GO:0005886">
    <property type="term" value="C:plasma membrane"/>
    <property type="evidence" value="ECO:0007669"/>
    <property type="project" value="UniProtKB-SubCell"/>
</dbReference>
<dbReference type="GO" id="GO:0032977">
    <property type="term" value="F:membrane insertase activity"/>
    <property type="evidence" value="ECO:0007669"/>
    <property type="project" value="InterPro"/>
</dbReference>
<dbReference type="GO" id="GO:0051205">
    <property type="term" value="P:protein insertion into membrane"/>
    <property type="evidence" value="ECO:0007669"/>
    <property type="project" value="TreeGrafter"/>
</dbReference>
<dbReference type="GO" id="GO:0015031">
    <property type="term" value="P:protein transport"/>
    <property type="evidence" value="ECO:0007669"/>
    <property type="project" value="UniProtKB-KW"/>
</dbReference>
<dbReference type="CDD" id="cd20070">
    <property type="entry name" value="5TM_YidC_Alb3"/>
    <property type="match status" value="1"/>
</dbReference>
<dbReference type="HAMAP" id="MF_01811">
    <property type="entry name" value="YidC_type2"/>
    <property type="match status" value="1"/>
</dbReference>
<dbReference type="InterPro" id="IPR001708">
    <property type="entry name" value="YidC/ALB3/OXA1/COX18"/>
</dbReference>
<dbReference type="InterPro" id="IPR028055">
    <property type="entry name" value="YidC/Oxa/ALB_C"/>
</dbReference>
<dbReference type="InterPro" id="IPR023060">
    <property type="entry name" value="YidC/YidC1/YidC2_Firmicutes"/>
</dbReference>
<dbReference type="InterPro" id="IPR047196">
    <property type="entry name" value="YidC_ALB_C"/>
</dbReference>
<dbReference type="NCBIfam" id="TIGR03592">
    <property type="entry name" value="yidC_oxa1_cterm"/>
    <property type="match status" value="1"/>
</dbReference>
<dbReference type="PANTHER" id="PTHR12428:SF65">
    <property type="entry name" value="CYTOCHROME C OXIDASE ASSEMBLY PROTEIN COX18, MITOCHONDRIAL"/>
    <property type="match status" value="1"/>
</dbReference>
<dbReference type="PANTHER" id="PTHR12428">
    <property type="entry name" value="OXA1"/>
    <property type="match status" value="1"/>
</dbReference>
<dbReference type="Pfam" id="PF02096">
    <property type="entry name" value="60KD_IMP"/>
    <property type="match status" value="1"/>
</dbReference>
<dbReference type="PRINTS" id="PR00701">
    <property type="entry name" value="60KDINNERMP"/>
</dbReference>
<dbReference type="PROSITE" id="PS51257">
    <property type="entry name" value="PROKAR_LIPOPROTEIN"/>
    <property type="match status" value="1"/>
</dbReference>